<dbReference type="EC" id="4.1.1.17"/>
<dbReference type="EMBL" id="X16910">
    <property type="protein sequence ID" value="CAA34784.1"/>
    <property type="molecule type" value="mRNA"/>
</dbReference>
<dbReference type="EMBL" id="J02813">
    <property type="protein sequence ID" value="AAA36963.1"/>
    <property type="molecule type" value="mRNA"/>
</dbReference>
<dbReference type="PIR" id="S09574">
    <property type="entry name" value="DCHYOC"/>
</dbReference>
<dbReference type="SMR" id="P14019"/>
<dbReference type="PaxDb" id="10029-XP_007633536.1"/>
<dbReference type="eggNOG" id="KOG0622">
    <property type="taxonomic scope" value="Eukaryota"/>
</dbReference>
<dbReference type="UniPathway" id="UPA00535">
    <property type="reaction ID" value="UER00288"/>
</dbReference>
<dbReference type="Proteomes" id="UP000694386">
    <property type="component" value="Unplaced"/>
</dbReference>
<dbReference type="Proteomes" id="UP001108280">
    <property type="component" value="Unplaced"/>
</dbReference>
<dbReference type="GO" id="GO:0005737">
    <property type="term" value="C:cytoplasm"/>
    <property type="evidence" value="ECO:0000250"/>
    <property type="project" value="UniProtKB"/>
</dbReference>
<dbReference type="GO" id="GO:0004586">
    <property type="term" value="F:ornithine decarboxylase activity"/>
    <property type="evidence" value="ECO:0000250"/>
    <property type="project" value="UniProtKB"/>
</dbReference>
<dbReference type="GO" id="GO:0042803">
    <property type="term" value="F:protein homodimerization activity"/>
    <property type="evidence" value="ECO:0000250"/>
    <property type="project" value="UniProtKB"/>
</dbReference>
<dbReference type="GO" id="GO:0033387">
    <property type="term" value="P:putrescine biosynthetic process from arginine, via ornithine"/>
    <property type="evidence" value="ECO:0000250"/>
    <property type="project" value="UniProtKB"/>
</dbReference>
<dbReference type="GO" id="GO:0042176">
    <property type="term" value="P:regulation of protein catabolic process"/>
    <property type="evidence" value="ECO:0000250"/>
    <property type="project" value="UniProtKB"/>
</dbReference>
<dbReference type="CDD" id="cd00622">
    <property type="entry name" value="PLPDE_III_ODC"/>
    <property type="match status" value="1"/>
</dbReference>
<dbReference type="FunFam" id="2.40.37.10:FF:000005">
    <property type="entry name" value="Ornithine decarboxylase"/>
    <property type="match status" value="1"/>
</dbReference>
<dbReference type="FunFam" id="3.20.20.10:FF:000006">
    <property type="entry name" value="Ornithine decarboxylase 1"/>
    <property type="match status" value="1"/>
</dbReference>
<dbReference type="Gene3D" id="3.20.20.10">
    <property type="entry name" value="Alanine racemase"/>
    <property type="match status" value="1"/>
</dbReference>
<dbReference type="Gene3D" id="2.40.37.10">
    <property type="entry name" value="Lyase, Ornithine Decarboxylase, Chain A, domain 1"/>
    <property type="match status" value="1"/>
</dbReference>
<dbReference type="InterPro" id="IPR009006">
    <property type="entry name" value="Ala_racemase/Decarboxylase_C"/>
</dbReference>
<dbReference type="InterPro" id="IPR022643">
    <property type="entry name" value="De-COase2_C"/>
</dbReference>
<dbReference type="InterPro" id="IPR022644">
    <property type="entry name" value="De-COase2_N"/>
</dbReference>
<dbReference type="InterPro" id="IPR022653">
    <property type="entry name" value="De-COase2_pyr-phos_BS"/>
</dbReference>
<dbReference type="InterPro" id="IPR000183">
    <property type="entry name" value="Orn/DAP/Arg_de-COase"/>
</dbReference>
<dbReference type="InterPro" id="IPR002433">
    <property type="entry name" value="Orn_de-COase"/>
</dbReference>
<dbReference type="InterPro" id="IPR029066">
    <property type="entry name" value="PLP-binding_barrel"/>
</dbReference>
<dbReference type="PANTHER" id="PTHR11482">
    <property type="entry name" value="ARGININE/DIAMINOPIMELATE/ORNITHINE DECARBOXYLASE"/>
    <property type="match status" value="1"/>
</dbReference>
<dbReference type="PANTHER" id="PTHR11482:SF42">
    <property type="entry name" value="ORNITHINE DECARBOXYLASE"/>
    <property type="match status" value="1"/>
</dbReference>
<dbReference type="Pfam" id="PF02784">
    <property type="entry name" value="Orn_Arg_deC_N"/>
    <property type="match status" value="1"/>
</dbReference>
<dbReference type="Pfam" id="PF00278">
    <property type="entry name" value="Orn_DAP_Arg_deC"/>
    <property type="match status" value="1"/>
</dbReference>
<dbReference type="PRINTS" id="PR01179">
    <property type="entry name" value="ODADCRBXLASE"/>
</dbReference>
<dbReference type="PRINTS" id="PR01182">
    <property type="entry name" value="ORNDCRBXLASE"/>
</dbReference>
<dbReference type="SUPFAM" id="SSF50621">
    <property type="entry name" value="Alanine racemase C-terminal domain-like"/>
    <property type="match status" value="1"/>
</dbReference>
<dbReference type="SUPFAM" id="SSF51419">
    <property type="entry name" value="PLP-binding barrel"/>
    <property type="match status" value="1"/>
</dbReference>
<dbReference type="PROSITE" id="PS00878">
    <property type="entry name" value="ODR_DC_2_1"/>
    <property type="match status" value="1"/>
</dbReference>
<dbReference type="PROSITE" id="PS00879">
    <property type="entry name" value="ODR_DC_2_2"/>
    <property type="match status" value="1"/>
</dbReference>
<gene>
    <name type="primary">ODC1</name>
    <name type="synonym">ODC</name>
</gene>
<name>DCOR_CRIGR</name>
<proteinExistence type="evidence at transcript level"/>
<protein>
    <recommendedName>
        <fullName>Ornithine decarboxylase</fullName>
        <shortName>ODC</shortName>
        <ecNumber>4.1.1.17</ecNumber>
    </recommendedName>
</protein>
<comment type="function">
    <text evidence="3">Catalyzes the first and rate-limiting step of polyamine biosynthesis that converts ornithine into putrescine, which is the precursor for the polyamines, spermidine and spermine. Polyamines are essential for cell proliferation and are implicated in cellular processes, ranging from DNA replication to apoptosis.</text>
</comment>
<comment type="catalytic activity">
    <reaction evidence="3">
        <text>L-ornithine + H(+) = putrescine + CO2</text>
        <dbReference type="Rhea" id="RHEA:22964"/>
        <dbReference type="ChEBI" id="CHEBI:15378"/>
        <dbReference type="ChEBI" id="CHEBI:16526"/>
        <dbReference type="ChEBI" id="CHEBI:46911"/>
        <dbReference type="ChEBI" id="CHEBI:326268"/>
        <dbReference type="EC" id="4.1.1.17"/>
    </reaction>
</comment>
<comment type="cofactor">
    <cofactor evidence="3">
        <name>pyridoxal 5'-phosphate</name>
        <dbReference type="ChEBI" id="CHEBI:597326"/>
    </cofactor>
</comment>
<comment type="activity regulation">
    <text evidence="3">Inhibited by antizymes (AZs) OAZ1, OAZ2 and OAZ3 in response to polyamine levels. AZs inhibit the assembly of the functional homodimer by binding to ODC monomers. Additionally, OAZ1 targets ODC monomers for ubiquitin-independent proteolytic destruction by the 26S proteasome.</text>
</comment>
<comment type="pathway">
    <text>Amine and polyamine biosynthesis; putrescine biosynthesis via L-ornithine pathway; putrescine from L-ornithine: step 1/1.</text>
</comment>
<comment type="subunit">
    <text evidence="1">Homodimer. Only the dimer is catalytically active, as the active sites are constructed of residues from both monomers.</text>
</comment>
<comment type="similarity">
    <text evidence="4">Belongs to the Orn/Lys/Arg decarboxylase class-II family.</text>
</comment>
<evidence type="ECO:0000250" key="1">
    <source>
        <dbReference type="UniProtKB" id="P00860"/>
    </source>
</evidence>
<evidence type="ECO:0000250" key="2">
    <source>
        <dbReference type="UniProtKB" id="P07805"/>
    </source>
</evidence>
<evidence type="ECO:0000250" key="3">
    <source>
        <dbReference type="UniProtKB" id="P11926"/>
    </source>
</evidence>
<evidence type="ECO:0000305" key="4"/>
<keyword id="KW-0210">Decarboxylase</keyword>
<keyword id="KW-0456">Lyase</keyword>
<keyword id="KW-0597">Phosphoprotein</keyword>
<keyword id="KW-0620">Polyamine biosynthesis</keyword>
<keyword id="KW-0663">Pyridoxal phosphate</keyword>
<keyword id="KW-0702">S-nitrosylation</keyword>
<organism>
    <name type="scientific">Cricetulus griseus</name>
    <name type="common">Chinese hamster</name>
    <name type="synonym">Cricetulus barabensis griseus</name>
    <dbReference type="NCBI Taxonomy" id="10029"/>
    <lineage>
        <taxon>Eukaryota</taxon>
        <taxon>Metazoa</taxon>
        <taxon>Chordata</taxon>
        <taxon>Craniata</taxon>
        <taxon>Vertebrata</taxon>
        <taxon>Euteleostomi</taxon>
        <taxon>Mammalia</taxon>
        <taxon>Eutheria</taxon>
        <taxon>Euarchontoglires</taxon>
        <taxon>Glires</taxon>
        <taxon>Rodentia</taxon>
        <taxon>Myomorpha</taxon>
        <taxon>Muroidea</taxon>
        <taxon>Cricetidae</taxon>
        <taxon>Cricetinae</taxon>
        <taxon>Cricetulus</taxon>
    </lineage>
</organism>
<accession>P14019</accession>
<reference key="1">
    <citation type="journal article" date="1989" name="Nucleic Acids Res.">
        <title>Nucleotide sequence of the Chinese hamster ornithine decarboxylase gene.</title>
        <authorList>
            <person name="Grens A."/>
            <person name="Steglich C."/>
            <person name="Pilz R."/>
            <person name="Scheffler I.E."/>
        </authorList>
    </citation>
    <scope>NUCLEOTIDE SEQUENCE [MRNA]</scope>
</reference>
<reference key="2">
    <citation type="journal article" date="1987" name="J. Biol. Chem.">
        <title>The gene for ornithine decarboxylase is co-amplified in hydroxyurea-resistant hamster cells.</title>
        <authorList>
            <person name="Srinivasan P.R."/>
            <person name="Tonin P.N."/>
            <person name="Wensing E.J."/>
            <person name="Lewis W.H."/>
        </authorList>
    </citation>
    <scope>NUCLEOTIDE SEQUENCE [MRNA] OF 163-455</scope>
</reference>
<sequence length="455" mass="50454">MNSFNKDEFDCHILDEGFTAKDILDQKINEVSSDDKDAFYVADLGDVLKKHLRWLKALPVTPFYAVKCNDSRALVNTLAAITVDCASKTEIQLVQGLGVPPERVIYANPCKQVSQIKYAASNGVQMMTFDSEIELMKVARAHPKVTKLVLRIATDDSKAVCRLSVKFGATLRTSRLLLERAKELNIDVIGVSFHVGSGCTDPETFVQALSDARCVFDMGTEVGFSMYLLDIGGGFPGSEDTKLKFEEITSVINPALDKYFPPDSGVRVIAEPGRYYVASAFTLAVNIIAKKIVSKGSDDEDESSEQTFMYYVNDGVYGSFNCILYDHAHVKPLLPKRPKPDEKYYSSSIWGPTCDGLDRIVERCNLPEMHVGDWMLFENMGAYTVAAASTFNGFQRPSIYYVMSRPMWQLMKQIQNHGFPPEVEEQDVGTLPISCAQESGMDRHPAACASASINV</sequence>
<feature type="chain" id="PRO_0000149890" description="Ornithine decarboxylase">
    <location>
        <begin position="1"/>
        <end position="455"/>
    </location>
</feature>
<feature type="active site" description="Proton donor; shared with dimeric partner" evidence="3">
    <location>
        <position position="354"/>
    </location>
</feature>
<feature type="binding site" evidence="3">
    <location>
        <position position="197"/>
    </location>
    <ligand>
        <name>pyridoxal 5'-phosphate</name>
        <dbReference type="ChEBI" id="CHEBI:597326"/>
    </ligand>
</feature>
<feature type="binding site" evidence="3">
    <location>
        <position position="234"/>
    </location>
    <ligand>
        <name>pyridoxal 5'-phosphate</name>
        <dbReference type="ChEBI" id="CHEBI:597326"/>
    </ligand>
</feature>
<feature type="binding site" evidence="3">
    <location>
        <begin position="271"/>
        <end position="274"/>
    </location>
    <ligand>
        <name>pyridoxal 5'-phosphate</name>
        <dbReference type="ChEBI" id="CHEBI:597326"/>
    </ligand>
</feature>
<feature type="binding site" description="in other chain" evidence="2">
    <location>
        <begin position="325"/>
        <end position="326"/>
    </location>
    <ligand>
        <name>substrate</name>
        <note>ligand shared between dimeric partners</note>
    </ligand>
</feature>
<feature type="binding site" evidence="2">
    <location>
        <position position="355"/>
    </location>
    <ligand>
        <name>substrate</name>
        <note>ligand shared between dimeric partners</note>
    </ligand>
</feature>
<feature type="binding site" evidence="3">
    <location>
        <position position="383"/>
    </location>
    <ligand>
        <name>pyridoxal 5'-phosphate</name>
        <dbReference type="ChEBI" id="CHEBI:597326"/>
    </ligand>
</feature>
<feature type="site" description="Stacks against the aromatic ring of pyridoxal phosphate and stabilizes reaction intermediates" evidence="1">
    <location>
        <position position="194"/>
    </location>
</feature>
<feature type="modified residue" description="N6-(pyridoxal phosphate)lysine" evidence="3">
    <location>
        <position position="67"/>
    </location>
</feature>
<feature type="modified residue" description="Phosphoserine; by CK2" evidence="1">
    <location>
        <position position="297"/>
    </location>
</feature>
<feature type="modified residue" description="S-nitrosocysteine" evidence="3">
    <location>
        <position position="354"/>
    </location>
</feature>
<feature type="sequence conflict" description="In Ref. 2." evidence="4" ref="2">
    <original>S</original>
    <variation>R</variation>
    <location>
        <position position="452"/>
    </location>
</feature>